<comment type="subcellular location">
    <subcellularLocation>
        <location evidence="1">Periplasm</location>
    </subcellularLocation>
</comment>
<comment type="similarity">
    <text evidence="1">Belongs to the UPF0312 family. Type 1 subfamily.</text>
</comment>
<sequence>MLKNALAALVLGSALIGGQAMAADYAIDKQGQHAFVNFKISHLGYSWLYGTFKDFDGKFSFDAANPEASKVSVTLNTASVDTNHAERDKHIRSADFLNVSKHGTATFESTSVKSTGEGTADITGDLTLNGVTKPVVIAAKFIGEGKDPWGGYRAGFEGTTTLKLKDFDITKDLGPASETVELILSIEGIRQ</sequence>
<reference key="1">
    <citation type="submission" date="2007-04" db="EMBL/GenBank/DDBJ databases">
        <title>Complete sequence of Pseudomonas mendocina ymp.</title>
        <authorList>
            <consortium name="US DOE Joint Genome Institute"/>
            <person name="Copeland A."/>
            <person name="Lucas S."/>
            <person name="Lapidus A."/>
            <person name="Barry K."/>
            <person name="Glavina del Rio T."/>
            <person name="Dalin E."/>
            <person name="Tice H."/>
            <person name="Pitluck S."/>
            <person name="Kiss H."/>
            <person name="Brettin T."/>
            <person name="Detter J.C."/>
            <person name="Bruce D."/>
            <person name="Han C."/>
            <person name="Schmutz J."/>
            <person name="Larimer F."/>
            <person name="Land M."/>
            <person name="Hauser L."/>
            <person name="Kyrpides N."/>
            <person name="Mikhailova N."/>
            <person name="Hersman L."/>
            <person name="Dubois J."/>
            <person name="Maurice P."/>
            <person name="Richardson P."/>
        </authorList>
    </citation>
    <scope>NUCLEOTIDE SEQUENCE [LARGE SCALE GENOMIC DNA]</scope>
    <source>
        <strain>ymp</strain>
    </source>
</reference>
<name>Y419_ECTM1</name>
<organism>
    <name type="scientific">Ectopseudomonas mendocina (strain ymp)</name>
    <name type="common">Pseudomonas mendocina</name>
    <dbReference type="NCBI Taxonomy" id="399739"/>
    <lineage>
        <taxon>Bacteria</taxon>
        <taxon>Pseudomonadati</taxon>
        <taxon>Pseudomonadota</taxon>
        <taxon>Gammaproteobacteria</taxon>
        <taxon>Pseudomonadales</taxon>
        <taxon>Pseudomonadaceae</taxon>
        <taxon>Ectopseudomonas</taxon>
    </lineage>
</organism>
<feature type="signal peptide" evidence="1">
    <location>
        <begin position="1"/>
        <end position="22"/>
    </location>
</feature>
<feature type="chain" id="PRO_5000240082" description="UPF0312 protein Pmen_0419">
    <location>
        <begin position="23"/>
        <end position="191"/>
    </location>
</feature>
<proteinExistence type="inferred from homology"/>
<protein>
    <recommendedName>
        <fullName evidence="1">UPF0312 protein Pmen_0419</fullName>
    </recommendedName>
</protein>
<accession>A4XPC6</accession>
<evidence type="ECO:0000255" key="1">
    <source>
        <dbReference type="HAMAP-Rule" id="MF_00780"/>
    </source>
</evidence>
<gene>
    <name type="ordered locus">Pmen_0419</name>
</gene>
<keyword id="KW-0574">Periplasm</keyword>
<keyword id="KW-0732">Signal</keyword>
<dbReference type="EMBL" id="CP000680">
    <property type="protein sequence ID" value="ABP83192.1"/>
    <property type="molecule type" value="Genomic_DNA"/>
</dbReference>
<dbReference type="SMR" id="A4XPC6"/>
<dbReference type="STRING" id="399739.Pmen_0419"/>
<dbReference type="KEGG" id="pmy:Pmen_0419"/>
<dbReference type="PATRIC" id="fig|399739.8.peg.429"/>
<dbReference type="eggNOG" id="COG2353">
    <property type="taxonomic scope" value="Bacteria"/>
</dbReference>
<dbReference type="HOGENOM" id="CLU_071003_1_2_6"/>
<dbReference type="OrthoDB" id="9811006at2"/>
<dbReference type="GO" id="GO:0042597">
    <property type="term" value="C:periplasmic space"/>
    <property type="evidence" value="ECO:0007669"/>
    <property type="project" value="UniProtKB-SubCell"/>
</dbReference>
<dbReference type="Gene3D" id="2.40.128.110">
    <property type="entry name" value="Lipid/polyisoprenoid-binding, YceI-like"/>
    <property type="match status" value="1"/>
</dbReference>
<dbReference type="HAMAP" id="MF_00780">
    <property type="entry name" value="UPF0312"/>
    <property type="match status" value="1"/>
</dbReference>
<dbReference type="InterPro" id="IPR007372">
    <property type="entry name" value="Lipid/polyisoprenoid-bd_YceI"/>
</dbReference>
<dbReference type="InterPro" id="IPR036761">
    <property type="entry name" value="TTHA0802/YceI-like_sf"/>
</dbReference>
<dbReference type="InterPro" id="IPR023480">
    <property type="entry name" value="UPF0312/YceI"/>
</dbReference>
<dbReference type="NCBIfam" id="NF002994">
    <property type="entry name" value="PRK03757.1"/>
    <property type="match status" value="1"/>
</dbReference>
<dbReference type="PANTHER" id="PTHR34406">
    <property type="entry name" value="PROTEIN YCEI"/>
    <property type="match status" value="1"/>
</dbReference>
<dbReference type="PANTHER" id="PTHR34406:SF1">
    <property type="entry name" value="PROTEIN YCEI"/>
    <property type="match status" value="1"/>
</dbReference>
<dbReference type="Pfam" id="PF04264">
    <property type="entry name" value="YceI"/>
    <property type="match status" value="1"/>
</dbReference>
<dbReference type="SMART" id="SM00867">
    <property type="entry name" value="YceI"/>
    <property type="match status" value="1"/>
</dbReference>
<dbReference type="SUPFAM" id="SSF101874">
    <property type="entry name" value="YceI-like"/>
    <property type="match status" value="1"/>
</dbReference>